<feature type="chain" id="PRO_0000422205" description="Alpha-farnesene synthase">
    <location>
        <begin position="1"/>
        <end position="564"/>
    </location>
</feature>
<feature type="short sequence motif" description="DDXXD motif">
    <location>
        <begin position="313"/>
        <end position="317"/>
    </location>
</feature>
<feature type="binding site" evidence="2">
    <location>
        <position position="313"/>
    </location>
    <ligand>
        <name>Mg(2+)</name>
        <dbReference type="ChEBI" id="CHEBI:18420"/>
        <label>1</label>
    </ligand>
</feature>
<feature type="binding site" evidence="2">
    <location>
        <position position="313"/>
    </location>
    <ligand>
        <name>Mg(2+)</name>
        <dbReference type="ChEBI" id="CHEBI:18420"/>
        <label>2</label>
    </ligand>
</feature>
<feature type="binding site" evidence="2">
    <location>
        <position position="317"/>
    </location>
    <ligand>
        <name>Mg(2+)</name>
        <dbReference type="ChEBI" id="CHEBI:18420"/>
        <label>1</label>
    </ligand>
</feature>
<feature type="binding site" evidence="2">
    <location>
        <position position="317"/>
    </location>
    <ligand>
        <name>Mg(2+)</name>
        <dbReference type="ChEBI" id="CHEBI:18420"/>
        <label>2</label>
    </ligand>
</feature>
<feature type="binding site" evidence="2">
    <location>
        <position position="464"/>
    </location>
    <ligand>
        <name>Mg(2+)</name>
        <dbReference type="ChEBI" id="CHEBI:18420"/>
        <label>3</label>
    </ligand>
</feature>
<feature type="binding site" evidence="2">
    <location>
        <position position="468"/>
    </location>
    <ligand>
        <name>Mg(2+)</name>
        <dbReference type="ChEBI" id="CHEBI:18420"/>
        <label>3</label>
    </ligand>
</feature>
<feature type="sequence conflict" description="In Ref. 1; AEQ27768." evidence="4" ref="1">
    <original>AKK</original>
    <variation>DVF</variation>
    <location>
        <begin position="136"/>
        <end position="138"/>
    </location>
</feature>
<feature type="sequence conflict" description="In Ref. 1; AEQ27768." evidence="4" ref="1">
    <original>R</original>
    <variation>Q</variation>
    <location>
        <position position="389"/>
    </location>
</feature>
<gene>
    <name type="primary">TPS7</name>
    <name type="ORF">RCOM_0906600</name>
</gene>
<dbReference type="EC" id="4.2.3.46"/>
<dbReference type="EMBL" id="JN315866">
    <property type="protein sequence ID" value="AEQ27768.1"/>
    <property type="molecule type" value="mRNA"/>
</dbReference>
<dbReference type="EMBL" id="EQ973828">
    <property type="protein sequence ID" value="EEF43966.1"/>
    <property type="status" value="ALT_SEQ"/>
    <property type="molecule type" value="Genomic_DNA"/>
</dbReference>
<dbReference type="RefSeq" id="NP_001310649.1">
    <property type="nucleotide sequence ID" value="NM_001323720.1"/>
</dbReference>
<dbReference type="SMR" id="B9RXW0"/>
<dbReference type="STRING" id="3988.B9RXW0"/>
<dbReference type="GeneID" id="8267421"/>
<dbReference type="KEGG" id="rcu:8267421"/>
<dbReference type="eggNOG" id="ENOG502QUXA">
    <property type="taxonomic scope" value="Eukaryota"/>
</dbReference>
<dbReference type="InParanoid" id="B9RXW0"/>
<dbReference type="OrthoDB" id="1936865at2759"/>
<dbReference type="BRENDA" id="4.2.3.46">
    <property type="organism ID" value="1204"/>
</dbReference>
<dbReference type="Proteomes" id="UP000008311">
    <property type="component" value="Unassembled WGS sequence"/>
</dbReference>
<dbReference type="GO" id="GO:0052578">
    <property type="term" value="F:alpha-farnesene synthase activity"/>
    <property type="evidence" value="ECO:0007669"/>
    <property type="project" value="RHEA"/>
</dbReference>
<dbReference type="GO" id="GO:0000287">
    <property type="term" value="F:magnesium ion binding"/>
    <property type="evidence" value="ECO:0007669"/>
    <property type="project" value="InterPro"/>
</dbReference>
<dbReference type="GO" id="GO:0010334">
    <property type="term" value="F:sesquiterpene synthase activity"/>
    <property type="evidence" value="ECO:0000314"/>
    <property type="project" value="UniProtKB"/>
</dbReference>
<dbReference type="GO" id="GO:0016102">
    <property type="term" value="P:diterpenoid biosynthetic process"/>
    <property type="evidence" value="ECO:0007669"/>
    <property type="project" value="InterPro"/>
</dbReference>
<dbReference type="GO" id="GO:0051762">
    <property type="term" value="P:sesquiterpene biosynthetic process"/>
    <property type="evidence" value="ECO:0000314"/>
    <property type="project" value="UniProtKB"/>
</dbReference>
<dbReference type="CDD" id="cd00684">
    <property type="entry name" value="Terpene_cyclase_plant_C1"/>
    <property type="match status" value="1"/>
</dbReference>
<dbReference type="FunFam" id="1.10.600.10:FF:000007">
    <property type="entry name" value="Isoprene synthase, chloroplastic"/>
    <property type="match status" value="1"/>
</dbReference>
<dbReference type="FunFam" id="1.50.10.130:FF:000006">
    <property type="entry name" value="Terpene synthase 7"/>
    <property type="match status" value="1"/>
</dbReference>
<dbReference type="Gene3D" id="1.10.600.10">
    <property type="entry name" value="Farnesyl Diphosphate Synthase"/>
    <property type="match status" value="1"/>
</dbReference>
<dbReference type="Gene3D" id="1.50.10.130">
    <property type="entry name" value="Terpene synthase, N-terminal domain"/>
    <property type="match status" value="1"/>
</dbReference>
<dbReference type="InterPro" id="IPR008949">
    <property type="entry name" value="Isoprenoid_synthase_dom_sf"/>
</dbReference>
<dbReference type="InterPro" id="IPR034741">
    <property type="entry name" value="Terpene_cyclase-like_1_C"/>
</dbReference>
<dbReference type="InterPro" id="IPR044814">
    <property type="entry name" value="Terpene_cyclase_plant_C1"/>
</dbReference>
<dbReference type="InterPro" id="IPR001906">
    <property type="entry name" value="Terpene_synth_N"/>
</dbReference>
<dbReference type="InterPro" id="IPR036965">
    <property type="entry name" value="Terpene_synth_N_sf"/>
</dbReference>
<dbReference type="InterPro" id="IPR050148">
    <property type="entry name" value="Terpene_synthase-like"/>
</dbReference>
<dbReference type="InterPro" id="IPR005630">
    <property type="entry name" value="Terpene_synthase_metal-bd"/>
</dbReference>
<dbReference type="InterPro" id="IPR008930">
    <property type="entry name" value="Terpenoid_cyclase/PrenylTrfase"/>
</dbReference>
<dbReference type="PANTHER" id="PTHR31225:SF94">
    <property type="entry name" value="ALPHA-FARNESENE SYNTHASE"/>
    <property type="match status" value="1"/>
</dbReference>
<dbReference type="PANTHER" id="PTHR31225">
    <property type="entry name" value="OS04G0344100 PROTEIN-RELATED"/>
    <property type="match status" value="1"/>
</dbReference>
<dbReference type="Pfam" id="PF01397">
    <property type="entry name" value="Terpene_synth"/>
    <property type="match status" value="1"/>
</dbReference>
<dbReference type="Pfam" id="PF03936">
    <property type="entry name" value="Terpene_synth_C"/>
    <property type="match status" value="1"/>
</dbReference>
<dbReference type="SFLD" id="SFLDS00005">
    <property type="entry name" value="Isoprenoid_Synthase_Type_I"/>
    <property type="match status" value="1"/>
</dbReference>
<dbReference type="SFLD" id="SFLDG01019">
    <property type="entry name" value="Terpene_Cyclase_Like_1_C_Termi"/>
    <property type="match status" value="1"/>
</dbReference>
<dbReference type="SUPFAM" id="SSF48239">
    <property type="entry name" value="Terpenoid cyclases/Protein prenyltransferases"/>
    <property type="match status" value="1"/>
</dbReference>
<dbReference type="SUPFAM" id="SSF48576">
    <property type="entry name" value="Terpenoid synthases"/>
    <property type="match status" value="1"/>
</dbReference>
<organism>
    <name type="scientific">Ricinus communis</name>
    <name type="common">Castor bean</name>
    <dbReference type="NCBI Taxonomy" id="3988"/>
    <lineage>
        <taxon>Eukaryota</taxon>
        <taxon>Viridiplantae</taxon>
        <taxon>Streptophyta</taxon>
        <taxon>Embryophyta</taxon>
        <taxon>Tracheophyta</taxon>
        <taxon>Spermatophyta</taxon>
        <taxon>Magnoliopsida</taxon>
        <taxon>eudicotyledons</taxon>
        <taxon>Gunneridae</taxon>
        <taxon>Pentapetalae</taxon>
        <taxon>rosids</taxon>
        <taxon>fabids</taxon>
        <taxon>Malpighiales</taxon>
        <taxon>Euphorbiaceae</taxon>
        <taxon>Acalyphoideae</taxon>
        <taxon>Acalypheae</taxon>
        <taxon>Ricinus</taxon>
    </lineage>
</organism>
<reference key="1">
    <citation type="journal article" date="2012" name="Phytochemistry">
        <title>Functional characterization of four sesquiterpene synthases from Ricinus communis (castor bean).</title>
        <authorList>
            <person name="Xie X."/>
            <person name="Kirby J."/>
            <person name="Keasling J.D."/>
        </authorList>
    </citation>
    <scope>NUCLEOTIDE SEQUENCE [MRNA]</scope>
    <scope>FUNCTION</scope>
    <scope>CATALYTIC ACTIVITY</scope>
</reference>
<reference key="2">
    <citation type="journal article" date="2010" name="Nat. Biotechnol.">
        <title>Draft genome sequence of the oilseed species Ricinus communis.</title>
        <authorList>
            <person name="Chan A.P."/>
            <person name="Crabtree J."/>
            <person name="Zhao Q."/>
            <person name="Lorenzi H."/>
            <person name="Orvis J."/>
            <person name="Puiu D."/>
            <person name="Melake-Berhan A."/>
            <person name="Jones K.M."/>
            <person name="Redman J."/>
            <person name="Chen G."/>
            <person name="Cahoon E.B."/>
            <person name="Gedil M."/>
            <person name="Stanke M."/>
            <person name="Haas B.J."/>
            <person name="Wortman J.R."/>
            <person name="Fraser-Liggett C.M."/>
            <person name="Ravel J."/>
            <person name="Rabinowicz P.D."/>
        </authorList>
    </citation>
    <scope>NUCLEOTIDE SEQUENCE [LARGE SCALE GENOMIC DNA]</scope>
    <source>
        <strain>cv. Hale</strain>
    </source>
</reference>
<sequence length="564" mass="65793">MKVGQPVLQCQTNSEAFGMMQERRSGNYKPNIWKYDFLQSLSSKYDEEKYKTQAERLKEDAKHLFIEAVDLQGKLELVDCIIKVGLASHFKDEIKKALDTIASSIKNDKSDAIKNRYVTALCFRLLRQHGYEVSQAKKSDFLDENGTFLKAKSMDVKGVLELFEASYLALESENILDDAKAFSTTILKDINSATTESNLYKQVVHALELPFHWRVRWFDVKWHIKTFQKDKSINKTLLDLAKVNFNVVQATLQNDLKEISRWWRNLGLIENLKFSRDRLVESFLCTVGLVFEPQYSSFRRWLTKVVIMILVIDDVYDIYGSLEELQHFTNAINRWDTAELEQLPEYMKICFKTLHTITGETAHEMQREKRWDQEQTETHLKKVWADFCRALFVEAKWFNKGYTPSVQEYLKTACISSSGSLLSVHSFFLIMNEGTREMLHFLEKNQEMFYNISLIIRLCNDLGTSVAEQERGDAASSIVCHMREMEVLEEEARSYLKGIIGNYWKKVNEKCFTQSPEMQLFININVNMARVVHNLYQNRDGFGVQDHQNKKQILSLLVHPFKLD</sequence>
<comment type="function">
    <text evidence="3">Catalyzes the cyclization of farnesyl diphosphate to (E,E)-alpha-farnesene.</text>
</comment>
<comment type="catalytic activity">
    <reaction evidence="3">
        <text>(2E,6E)-farnesyl diphosphate = (3E,6E)-alpha-farnesene + diphosphate</text>
        <dbReference type="Rhea" id="RHEA:27421"/>
        <dbReference type="ChEBI" id="CHEBI:10280"/>
        <dbReference type="ChEBI" id="CHEBI:33019"/>
        <dbReference type="ChEBI" id="CHEBI:175763"/>
        <dbReference type="EC" id="4.2.3.46"/>
    </reaction>
</comment>
<comment type="cofactor">
    <cofactor evidence="1">
        <name>Mg(2+)</name>
        <dbReference type="ChEBI" id="CHEBI:18420"/>
    </cofactor>
    <text evidence="1">Binds 3 Mg(2+) ions per subunit.</text>
</comment>
<comment type="domain">
    <text evidence="1">The Asp-Asp-Xaa-Xaa-Asp/Glu (DDXXD/E) motif is important for the catalytic activity, presumably through binding to Mg(2+).</text>
</comment>
<comment type="similarity">
    <text evidence="4">Belongs to the terpene synthase family.</text>
</comment>
<comment type="sequence caution" evidence="4">
    <conflict type="erroneous gene model prediction">
        <sequence resource="EMBL-CDS" id="EEF43966"/>
    </conflict>
</comment>
<proteinExistence type="evidence at protein level"/>
<accession>B9RXW0</accession>
<accession>G5CT99</accession>
<keyword id="KW-0456">Lyase</keyword>
<keyword id="KW-0460">Magnesium</keyword>
<keyword id="KW-0479">Metal-binding</keyword>
<keyword id="KW-1185">Reference proteome</keyword>
<evidence type="ECO:0000250" key="1"/>
<evidence type="ECO:0000250" key="2">
    <source>
        <dbReference type="UniProtKB" id="O81192"/>
    </source>
</evidence>
<evidence type="ECO:0000269" key="3">
    <source>
    </source>
</evidence>
<evidence type="ECO:0000305" key="4"/>
<protein>
    <recommendedName>
        <fullName>Alpha-farnesene synthase</fullName>
        <ecNumber>4.2.3.46</ecNumber>
    </recommendedName>
    <alternativeName>
        <fullName>(E,E)-alpha-farnesene synthase</fullName>
    </alternativeName>
    <alternativeName>
        <fullName>Terpene synthase 7</fullName>
        <shortName>RcSeTPS7</shortName>
    </alternativeName>
</protein>
<name>TPS7_RICCO</name>